<feature type="initiator methionine" description="Removed" evidence="2">
    <location>
        <position position="1"/>
    </location>
</feature>
<feature type="chain" id="PRO_0000198827" description="Rod cGMP-specific 3',5'-cyclic phosphodiesterase subunit alpha">
    <location>
        <begin position="2"/>
        <end position="858"/>
    </location>
</feature>
<feature type="propeptide" id="PRO_0000396696" description="Removed in mature form" evidence="1">
    <location>
        <begin position="859"/>
        <end position="861"/>
    </location>
</feature>
<feature type="domain" description="GAF 1">
    <location>
        <begin position="73"/>
        <end position="222"/>
    </location>
</feature>
<feature type="domain" description="GAF 2">
    <location>
        <begin position="254"/>
        <end position="431"/>
    </location>
</feature>
<feature type="domain" description="PDEase" evidence="4">
    <location>
        <begin position="483"/>
        <end position="816"/>
    </location>
</feature>
<feature type="region of interest" description="Disordered" evidence="5">
    <location>
        <begin position="821"/>
        <end position="861"/>
    </location>
</feature>
<feature type="compositionally biased region" description="Low complexity" evidence="5">
    <location>
        <begin position="830"/>
        <end position="861"/>
    </location>
</feature>
<feature type="active site" description="Proton donor" evidence="1">
    <location>
        <position position="559"/>
    </location>
</feature>
<feature type="binding site" evidence="1">
    <location>
        <position position="563"/>
    </location>
    <ligand>
        <name>a divalent metal cation</name>
        <dbReference type="ChEBI" id="CHEBI:60240"/>
        <label>1</label>
    </ligand>
</feature>
<feature type="binding site" evidence="1">
    <location>
        <position position="599"/>
    </location>
    <ligand>
        <name>a divalent metal cation</name>
        <dbReference type="ChEBI" id="CHEBI:60240"/>
        <label>1</label>
    </ligand>
</feature>
<feature type="binding site" evidence="1">
    <location>
        <position position="600"/>
    </location>
    <ligand>
        <name>a divalent metal cation</name>
        <dbReference type="ChEBI" id="CHEBI:60240"/>
        <label>1</label>
    </ligand>
</feature>
<feature type="binding site" evidence="1">
    <location>
        <position position="600"/>
    </location>
    <ligand>
        <name>a divalent metal cation</name>
        <dbReference type="ChEBI" id="CHEBI:60240"/>
        <label>2</label>
    </ligand>
</feature>
<feature type="binding site" evidence="1">
    <location>
        <position position="720"/>
    </location>
    <ligand>
        <name>a divalent metal cation</name>
        <dbReference type="ChEBI" id="CHEBI:60240"/>
        <label>1</label>
    </ligand>
</feature>
<feature type="modified residue" description="N-acetylglycine" evidence="2">
    <location>
        <position position="2"/>
    </location>
</feature>
<feature type="modified residue" description="Cysteine methyl ester" evidence="1">
    <location>
        <position position="858"/>
    </location>
</feature>
<feature type="lipid moiety-binding region" description="S-farnesyl cysteine" evidence="1">
    <location>
        <position position="858"/>
    </location>
</feature>
<feature type="sequence conflict" description="In Ref. 2; AAB70037." evidence="6" ref="2">
    <original>M</original>
    <variation>L</variation>
    <location>
        <position position="388"/>
    </location>
</feature>
<proteinExistence type="evidence at transcript level"/>
<organism>
    <name type="scientific">Canis lupus familiaris</name>
    <name type="common">Dog</name>
    <name type="synonym">Canis familiaris</name>
    <dbReference type="NCBI Taxonomy" id="9615"/>
    <lineage>
        <taxon>Eukaryota</taxon>
        <taxon>Metazoa</taxon>
        <taxon>Chordata</taxon>
        <taxon>Craniata</taxon>
        <taxon>Vertebrata</taxon>
        <taxon>Euteleostomi</taxon>
        <taxon>Mammalia</taxon>
        <taxon>Eutheria</taxon>
        <taxon>Laurasiatheria</taxon>
        <taxon>Carnivora</taxon>
        <taxon>Caniformia</taxon>
        <taxon>Canidae</taxon>
        <taxon>Canis</taxon>
    </lineage>
</organism>
<accession>Q28263</accession>
<accession>Q29470</accession>
<keyword id="KW-0007">Acetylation</keyword>
<keyword id="KW-1003">Cell membrane</keyword>
<keyword id="KW-0966">Cell projection</keyword>
<keyword id="KW-0140">cGMP</keyword>
<keyword id="KW-0378">Hydrolase</keyword>
<keyword id="KW-0449">Lipoprotein</keyword>
<keyword id="KW-0472">Membrane</keyword>
<keyword id="KW-0479">Metal-binding</keyword>
<keyword id="KW-0488">Methylation</keyword>
<keyword id="KW-0636">Prenylation</keyword>
<keyword id="KW-1185">Reference proteome</keyword>
<keyword id="KW-0677">Repeat</keyword>
<keyword id="KW-0716">Sensory transduction</keyword>
<keyword id="KW-0844">Vision</keyword>
<sequence>MGEVTAEQVEKFLDSNIIFAKQYYNLRYRAKVISDMLGAKEAAVDFSNYHSLSSVEESEIIFDLLRDFQENLQAERCIFNVMKKLCFLLQADRMSLFMYRVRNGIAELATRLFNVHKDAVLEECLVAPDSEIVFPLDMGVVGHVAHSKKIANVVNTEEDEHFCDFVDTLTEYQTKNILASPIMNGKDVVAVIMAVNKVDEPHFTKRDEEILLKYLNFANLIMKVYHLSYLHNCETRRGQILLWSGSKVFEELTDIERQFHKALYTVRAFLNCDRYSVGLLDMTKQKEFFDVWPVLMGEAPPYSGPRTPDGREINFYKVIDYILHGKEDIKVIPNPPPDHWALVSGLPTYVAQNGLICNIMNAPAEDFFAFQKEPLDESGWMIKNVLSMPIVNKKEEIVGVATFYNRKDGKPFDEMDETLMESLAQFLGWSVLNPDTYESMNRLENRKDIFQDMVKYHVKCDNEEIQKILKTREVYGKEPWECEEEELAEILQGELPDAEKYEINKFHFSDLPLTELELVKCGIQMYYELKVVDKFHIPQEALVRFMYSLSKGYRRITYHNWRHGFNVGQTMFSLLVTGKLKRYFTDLEALAMVTAAFCHDIDHRGTNNLYQMKSQNPLAKLHGSSILERHHLEFGKTLLRDESLNIFQNLNRRQHEHAIHMMDIAIIATDLALYFKKRTMFQKIVDQSKTYETQQEWTQYMMLEQTRKEIVMAMMMTACDLSAITKPWEVQSKVALLVAAEFWEQGDLERTVLQQNPIPMMDRNKADELPKLQVGFIDFVCTFVYKEFSRFHEEITPMLDGITNNRKEWKALADEYDTKMKALEEEKQKQQTAKQGAAGDQPGGNPSPAGGAPASKSCCIQ</sequence>
<comment type="function">
    <text evidence="3">Rod-specific cGMP phosphodiesterase that catalyzes the hydrolysis of 3',5'-cyclic GMP. This protein participates in processes of transmission and amplification of the visual signal.</text>
</comment>
<comment type="catalytic activity">
    <reaction evidence="3">
        <text>3',5'-cyclic GMP + H2O = GMP + H(+)</text>
        <dbReference type="Rhea" id="RHEA:16957"/>
        <dbReference type="ChEBI" id="CHEBI:15377"/>
        <dbReference type="ChEBI" id="CHEBI:15378"/>
        <dbReference type="ChEBI" id="CHEBI:57746"/>
        <dbReference type="ChEBI" id="CHEBI:58115"/>
        <dbReference type="EC" id="3.1.4.35"/>
    </reaction>
    <physiologicalReaction direction="left-to-right" evidence="3">
        <dbReference type="Rhea" id="RHEA:16958"/>
    </physiologicalReaction>
</comment>
<comment type="cofactor">
    <cofactor evidence="1">
        <name>a divalent metal cation</name>
        <dbReference type="ChEBI" id="CHEBI:60240"/>
    </cofactor>
    <text evidence="1">Binds 2 divalent metal cations per subunit. Site 1 may preferentially bind zinc ions, while site 2 has a preference for magnesium and/or manganese ions.</text>
</comment>
<comment type="subunit">
    <text>Oligomer composed of two catalytic chains (alpha and beta), an inhibitory chain (gamma) and the delta chain.</text>
</comment>
<comment type="subcellular location">
    <subcellularLocation>
        <location evidence="3">Cell membrane</location>
        <topology evidence="3">Lipid-anchor</topology>
        <orientation evidence="3">Cytoplasmic side</orientation>
    </subcellularLocation>
    <subcellularLocation>
        <location evidence="3">Cell projection</location>
        <location evidence="3">Cilium</location>
        <location evidence="3">Photoreceptor outer segment</location>
    </subcellularLocation>
</comment>
<comment type="similarity">
    <text evidence="6">Belongs to the cyclic nucleotide phosphodiesterase family.</text>
</comment>
<evidence type="ECO:0000250" key="1"/>
<evidence type="ECO:0000250" key="2">
    <source>
        <dbReference type="UniProtKB" id="P11541"/>
    </source>
</evidence>
<evidence type="ECO:0000250" key="3">
    <source>
        <dbReference type="UniProtKB" id="P16499"/>
    </source>
</evidence>
<evidence type="ECO:0000255" key="4">
    <source>
        <dbReference type="PROSITE-ProRule" id="PRU01192"/>
    </source>
</evidence>
<evidence type="ECO:0000256" key="5">
    <source>
        <dbReference type="SAM" id="MobiDB-lite"/>
    </source>
</evidence>
<evidence type="ECO:0000305" key="6"/>
<protein>
    <recommendedName>
        <fullName evidence="3">Rod cGMP-specific 3',5'-cyclic phosphodiesterase subunit alpha</fullName>
        <shortName>GMP-PDE alpha</shortName>
        <ecNumber evidence="3">3.1.4.35</ecNumber>
    </recommendedName>
</protein>
<name>PDE6A_CANLF</name>
<reference key="1">
    <citation type="journal article" date="1996" name="Ophthalmic Res.">
        <title>Elevation of cGMP with normal expression and activity of rod cGMP-PDE in photoreceptor degenerate labrador retrievers.</title>
        <authorList>
            <person name="Kommonen B."/>
            <person name="Kylma T."/>
            <person name="Cohen R.J."/>
            <person name="Penn J.S."/>
            <person name="Paulin L."/>
            <person name="Hurwitz M."/>
            <person name="Hurwitz R.L."/>
        </authorList>
    </citation>
    <scope>NUCLEOTIDE SEQUENCE [MRNA]</scope>
    <source>
        <tissue>Retina</tissue>
    </source>
</reference>
<reference key="2">
    <citation type="journal article" date="1996" name="Mol. Vis.">
        <title>Cloning and characterization of the cDNA encoding the alpha-subunit of cGMP-phosphodiesterase in canine retinal rod photoreceptor cells.</title>
        <authorList>
            <person name="Wang W."/>
            <person name="Acland G.M."/>
            <person name="Aguirre G.D."/>
            <person name="Ray K."/>
        </authorList>
    </citation>
    <scope>NUCLEOTIDE SEQUENCE [MRNA]</scope>
</reference>
<reference key="3">
    <citation type="submission" date="1997-05" db="EMBL/GenBank/DDBJ databases">
        <authorList>
            <person name="Veske A."/>
            <person name="Nilsson S.E.G."/>
            <person name="Gal A."/>
        </authorList>
    </citation>
    <scope>NUCLEOTIDE SEQUENCE [MRNA]</scope>
    <source>
        <strain>Beagle X Briard</strain>
        <tissue>Retina</tissue>
    </source>
</reference>
<gene>
    <name evidence="3" type="primary">PDE6A</name>
    <name type="synonym">PDEA</name>
</gene>
<dbReference type="EC" id="3.1.4.35" evidence="3"/>
<dbReference type="EMBL" id="Z68340">
    <property type="protein sequence ID" value="CAA92763.1"/>
    <property type="molecule type" value="mRNA"/>
</dbReference>
<dbReference type="EMBL" id="U52868">
    <property type="protein sequence ID" value="AAB70037.1"/>
    <property type="molecule type" value="mRNA"/>
</dbReference>
<dbReference type="EMBL" id="Y13282">
    <property type="protein sequence ID" value="CAA73731.1"/>
    <property type="molecule type" value="mRNA"/>
</dbReference>
<dbReference type="RefSeq" id="NP_001003073.1">
    <property type="nucleotide sequence ID" value="NM_001003073.1"/>
</dbReference>
<dbReference type="SMR" id="Q28263"/>
<dbReference type="FunCoup" id="Q28263">
    <property type="interactions" value="18"/>
</dbReference>
<dbReference type="STRING" id="9615.ENSCAFP00000026963"/>
<dbReference type="BindingDB" id="Q28263"/>
<dbReference type="ChEMBL" id="CHEMBL5151"/>
<dbReference type="PaxDb" id="9612-ENSCAFP00000026963"/>
<dbReference type="Ensembl" id="ENSCAFT00000028993.4">
    <property type="protein sequence ID" value="ENSCAFP00000026963.3"/>
    <property type="gene ID" value="ENSCAFG00000018251.5"/>
</dbReference>
<dbReference type="Ensembl" id="ENSCAFT00040021065.1">
    <property type="protein sequence ID" value="ENSCAFP00040018290.1"/>
    <property type="gene ID" value="ENSCAFG00040011047.1"/>
</dbReference>
<dbReference type="Ensembl" id="ENSCAFT00845015823.1">
    <property type="protein sequence ID" value="ENSCAFP00845012309.1"/>
    <property type="gene ID" value="ENSCAFG00845008935.1"/>
</dbReference>
<dbReference type="GeneID" id="403620"/>
<dbReference type="KEGG" id="cfa:403620"/>
<dbReference type="CTD" id="5145"/>
<dbReference type="VEuPathDB" id="HostDB:ENSCAFG00845008935"/>
<dbReference type="VGNC" id="VGNC:44357">
    <property type="gene designation" value="PDE6A"/>
</dbReference>
<dbReference type="eggNOG" id="KOG3689">
    <property type="taxonomic scope" value="Eukaryota"/>
</dbReference>
<dbReference type="GeneTree" id="ENSGT00940000161330"/>
<dbReference type="InParanoid" id="Q28263"/>
<dbReference type="OrthoDB" id="546632at2759"/>
<dbReference type="Reactome" id="R-CFA-2485179">
    <property type="pathway name" value="Activation of the phototransduction cascade"/>
</dbReference>
<dbReference type="Reactome" id="R-CFA-2514859">
    <property type="pathway name" value="Inactivation, recovery and regulation of the phototransduction cascade"/>
</dbReference>
<dbReference type="Reactome" id="R-CFA-4086398">
    <property type="pathway name" value="Ca2+ pathway"/>
</dbReference>
<dbReference type="PRO" id="PR:Q28263"/>
<dbReference type="Proteomes" id="UP000002254">
    <property type="component" value="Chromosome 4"/>
</dbReference>
<dbReference type="Proteomes" id="UP000694429">
    <property type="component" value="Unplaced"/>
</dbReference>
<dbReference type="Proteomes" id="UP000694542">
    <property type="component" value="Chromosome 4"/>
</dbReference>
<dbReference type="Proteomes" id="UP000805418">
    <property type="component" value="Chromosome 4"/>
</dbReference>
<dbReference type="Bgee" id="ENSCAFG00000018251">
    <property type="expression patterns" value="Expressed in large intestine and 8 other cell types or tissues"/>
</dbReference>
<dbReference type="GO" id="GO:0042622">
    <property type="term" value="C:photoreceptor outer segment membrane"/>
    <property type="evidence" value="ECO:0000318"/>
    <property type="project" value="GO_Central"/>
</dbReference>
<dbReference type="GO" id="GO:0004115">
    <property type="term" value="F:3',5'-cyclic-AMP phosphodiesterase activity"/>
    <property type="evidence" value="ECO:0000318"/>
    <property type="project" value="GO_Central"/>
</dbReference>
<dbReference type="GO" id="GO:0047555">
    <property type="term" value="F:3',5'-cyclic-GMP phosphodiesterase activity"/>
    <property type="evidence" value="ECO:0000318"/>
    <property type="project" value="GO_Central"/>
</dbReference>
<dbReference type="GO" id="GO:0046872">
    <property type="term" value="F:metal ion binding"/>
    <property type="evidence" value="ECO:0007669"/>
    <property type="project" value="UniProtKB-KW"/>
</dbReference>
<dbReference type="GO" id="GO:0019933">
    <property type="term" value="P:cAMP-mediated signaling"/>
    <property type="evidence" value="ECO:0000318"/>
    <property type="project" value="GO_Central"/>
</dbReference>
<dbReference type="GO" id="GO:0060041">
    <property type="term" value="P:retina development in camera-type eye"/>
    <property type="evidence" value="ECO:0000318"/>
    <property type="project" value="GO_Central"/>
</dbReference>
<dbReference type="GO" id="GO:0007601">
    <property type="term" value="P:visual perception"/>
    <property type="evidence" value="ECO:0007669"/>
    <property type="project" value="UniProtKB-KW"/>
</dbReference>
<dbReference type="CDD" id="cd00077">
    <property type="entry name" value="HDc"/>
    <property type="match status" value="1"/>
</dbReference>
<dbReference type="FunFam" id="1.10.1300.10:FF:000005">
    <property type="entry name" value="Phosphodiesterase"/>
    <property type="match status" value="1"/>
</dbReference>
<dbReference type="FunFam" id="3.30.450.40:FF:000001">
    <property type="entry name" value="Phosphodiesterase"/>
    <property type="match status" value="1"/>
</dbReference>
<dbReference type="FunFam" id="3.30.450.40:FF:000010">
    <property type="entry name" value="Phosphodiesterase"/>
    <property type="match status" value="1"/>
</dbReference>
<dbReference type="Gene3D" id="3.30.450.40">
    <property type="match status" value="2"/>
</dbReference>
<dbReference type="Gene3D" id="1.10.1300.10">
    <property type="entry name" value="3'5'-cyclic nucleotide phosphodiesterase, catalytic domain"/>
    <property type="match status" value="1"/>
</dbReference>
<dbReference type="InterPro" id="IPR003018">
    <property type="entry name" value="GAF"/>
</dbReference>
<dbReference type="InterPro" id="IPR029016">
    <property type="entry name" value="GAF-like_dom_sf"/>
</dbReference>
<dbReference type="InterPro" id="IPR003607">
    <property type="entry name" value="HD/PDEase_dom"/>
</dbReference>
<dbReference type="InterPro" id="IPR023088">
    <property type="entry name" value="PDEase"/>
</dbReference>
<dbReference type="InterPro" id="IPR002073">
    <property type="entry name" value="PDEase_catalytic_dom"/>
</dbReference>
<dbReference type="InterPro" id="IPR036971">
    <property type="entry name" value="PDEase_catalytic_dom_sf"/>
</dbReference>
<dbReference type="InterPro" id="IPR023174">
    <property type="entry name" value="PDEase_CS"/>
</dbReference>
<dbReference type="PANTHER" id="PTHR11347">
    <property type="entry name" value="CYCLIC NUCLEOTIDE PHOSPHODIESTERASE"/>
    <property type="match status" value="1"/>
</dbReference>
<dbReference type="Pfam" id="PF01590">
    <property type="entry name" value="GAF"/>
    <property type="match status" value="2"/>
</dbReference>
<dbReference type="Pfam" id="PF00233">
    <property type="entry name" value="PDEase_I"/>
    <property type="match status" value="1"/>
</dbReference>
<dbReference type="PRINTS" id="PR00387">
    <property type="entry name" value="PDIESTERASE1"/>
</dbReference>
<dbReference type="SMART" id="SM00065">
    <property type="entry name" value="GAF"/>
    <property type="match status" value="2"/>
</dbReference>
<dbReference type="SMART" id="SM00471">
    <property type="entry name" value="HDc"/>
    <property type="match status" value="1"/>
</dbReference>
<dbReference type="SUPFAM" id="SSF55781">
    <property type="entry name" value="GAF domain-like"/>
    <property type="match status" value="2"/>
</dbReference>
<dbReference type="SUPFAM" id="SSF109604">
    <property type="entry name" value="HD-domain/PDEase-like"/>
    <property type="match status" value="1"/>
</dbReference>
<dbReference type="PROSITE" id="PS00126">
    <property type="entry name" value="PDEASE_I_1"/>
    <property type="match status" value="1"/>
</dbReference>
<dbReference type="PROSITE" id="PS51845">
    <property type="entry name" value="PDEASE_I_2"/>
    <property type="match status" value="1"/>
</dbReference>